<name>PP231_ARATH</name>
<feature type="chain" id="PRO_0000356090" description="Pentatricopeptide repeat-containing protein At3g14730">
    <location>
        <begin position="1"/>
        <end position="653"/>
    </location>
</feature>
<feature type="repeat" description="PPR 1">
    <location>
        <begin position="59"/>
        <end position="93"/>
    </location>
</feature>
<feature type="repeat" description="PPR 2">
    <location>
        <begin position="95"/>
        <end position="119"/>
    </location>
</feature>
<feature type="repeat" description="PPR 3">
    <location>
        <begin position="125"/>
        <end position="159"/>
    </location>
</feature>
<feature type="repeat" description="PPR 4">
    <location>
        <begin position="160"/>
        <end position="193"/>
    </location>
</feature>
<feature type="repeat" description="PPR 5">
    <location>
        <begin position="194"/>
        <end position="224"/>
    </location>
</feature>
<feature type="repeat" description="PPR 6">
    <location>
        <begin position="226"/>
        <end position="260"/>
    </location>
</feature>
<feature type="repeat" description="PPR 7">
    <location>
        <begin position="261"/>
        <end position="295"/>
    </location>
</feature>
<feature type="repeat" description="PPR 8">
    <location>
        <begin position="296"/>
        <end position="326"/>
    </location>
</feature>
<feature type="repeat" description="PPR 9">
    <location>
        <begin position="327"/>
        <end position="361"/>
    </location>
</feature>
<feature type="repeat" description="PPR 10">
    <location>
        <begin position="362"/>
        <end position="396"/>
    </location>
</feature>
<feature type="repeat" description="PPR 11">
    <location>
        <begin position="401"/>
        <end position="431"/>
    </location>
</feature>
<feature type="repeat" description="PPR 12">
    <location>
        <begin position="432"/>
        <end position="466"/>
    </location>
</feature>
<feature type="repeat" description="PPR 13">
    <location>
        <begin position="467"/>
        <end position="497"/>
    </location>
</feature>
<feature type="repeat" description="PPR 14">
    <location>
        <begin position="503"/>
        <end position="537"/>
    </location>
</feature>
<feature type="region of interest" description="Type E motif">
    <location>
        <begin position="538"/>
        <end position="613"/>
    </location>
</feature>
<feature type="region of interest" description="Type E(+) motif">
    <location>
        <begin position="614"/>
        <end position="644"/>
    </location>
</feature>
<sequence>MTVSFLRIEIQNCSAGILRFLPRNPDLFAAIKPSSALASLYSTVSGQIEENPKRYEHHNVATCIATLQRCAQRKDYVSGQQIHGFMVRKGFLDDSPRAGTSLVNMYAKCGLMRRAVLVFGGSERDVFGYNALISGFVVNGSPLDAMETYREMRANGILPDKYTFPSLLKGSDAMELSDVKKVHGLAFKLGFDSDCYVGSGLVTSYSKFMSVEDAQKVFDELPDRDDSVLWNALVNGYSQIFRFEDALLVFSKMREEGVGVSRHTITSVLSAFTVSGDIDNGRSIHGLAVKTGSGSDIVVSNALIDMYGKSKWLEEANSIFEAMDERDLFTWNSVLCVHDYCGDHDGTLALFERMLCSGIRPDIVTLTTVLPTCGRLASLRQGREIHGYMIVSGLLNRKSSNEFIHNSLMDMYVKCGDLRDARMVFDSMRVKDSASWNIMINGYGVQSCGELALDMFSCMCRAGVKPDEITFVGLLQACSHSGFLNEGRNFLAQMETVYNILPTSDHYACVIDMLGRADKLEEAYELAISKPICDNPVVWRSILSSCRLHGNKDLALVAGKRLHELEPEHCGGYVLMSNVYVEAGKYEEVLDVRDAMRQQNVKKTPGCSWIVLKNGVHTFFTGNQTHPEFKSIHDWLSLVISHMHGHEYMTVDD</sequence>
<protein>
    <recommendedName>
        <fullName>Pentatricopeptide repeat-containing protein At3g14730</fullName>
    </recommendedName>
</protein>
<proteinExistence type="evidence at transcript level"/>
<gene>
    <name type="primary">PCMP-E31</name>
    <name type="ordered locus">At3g14730</name>
    <name type="ORF">MIE1.23</name>
</gene>
<keyword id="KW-1185">Reference proteome</keyword>
<keyword id="KW-0677">Repeat</keyword>
<reference key="1">
    <citation type="journal article" date="2000" name="DNA Res.">
        <title>Structural analysis of Arabidopsis thaliana chromosome 3. I. Sequence features of the regions of 4,504,864 bp covered by sixty P1 and TAC clones.</title>
        <authorList>
            <person name="Sato S."/>
            <person name="Nakamura Y."/>
            <person name="Kaneko T."/>
            <person name="Katoh T."/>
            <person name="Asamizu E."/>
            <person name="Tabata S."/>
        </authorList>
    </citation>
    <scope>NUCLEOTIDE SEQUENCE [LARGE SCALE GENOMIC DNA]</scope>
    <source>
        <strain>cv. Columbia</strain>
    </source>
</reference>
<reference key="2">
    <citation type="journal article" date="2017" name="Plant J.">
        <title>Araport11: a complete reannotation of the Arabidopsis thaliana reference genome.</title>
        <authorList>
            <person name="Cheng C.Y."/>
            <person name="Krishnakumar V."/>
            <person name="Chan A.P."/>
            <person name="Thibaud-Nissen F."/>
            <person name="Schobel S."/>
            <person name="Town C.D."/>
        </authorList>
    </citation>
    <scope>GENOME REANNOTATION</scope>
    <source>
        <strain>cv. Columbia</strain>
    </source>
</reference>
<reference key="3">
    <citation type="journal article" date="2000" name="Plant Mol. Biol.">
        <title>In Arabidopsis thaliana, 1% of the genome codes for a novel protein family unique to plants.</title>
        <authorList>
            <person name="Aubourg S."/>
            <person name="Boudet N."/>
            <person name="Kreis M."/>
            <person name="Lecharny A."/>
        </authorList>
    </citation>
    <scope>GENE FAMILY</scope>
</reference>
<reference key="4">
    <citation type="journal article" date="2004" name="Plant Cell">
        <title>Genome-wide analysis of Arabidopsis pentatricopeptide repeat proteins reveals their essential role in organelle biogenesis.</title>
        <authorList>
            <person name="Lurin C."/>
            <person name="Andres C."/>
            <person name="Aubourg S."/>
            <person name="Bellaoui M."/>
            <person name="Bitton F."/>
            <person name="Bruyere C."/>
            <person name="Caboche M."/>
            <person name="Debast C."/>
            <person name="Gualberto J."/>
            <person name="Hoffmann B."/>
            <person name="Lecharny A."/>
            <person name="Le Ret M."/>
            <person name="Martin-Magniette M.-L."/>
            <person name="Mireau H."/>
            <person name="Peeters N."/>
            <person name="Renou J.-P."/>
            <person name="Szurek B."/>
            <person name="Taconnat L."/>
            <person name="Small I."/>
        </authorList>
    </citation>
    <scope>GENE FAMILY</scope>
</reference>
<organism>
    <name type="scientific">Arabidopsis thaliana</name>
    <name type="common">Mouse-ear cress</name>
    <dbReference type="NCBI Taxonomy" id="3702"/>
    <lineage>
        <taxon>Eukaryota</taxon>
        <taxon>Viridiplantae</taxon>
        <taxon>Streptophyta</taxon>
        <taxon>Embryophyta</taxon>
        <taxon>Tracheophyta</taxon>
        <taxon>Spermatophyta</taxon>
        <taxon>Magnoliopsida</taxon>
        <taxon>eudicotyledons</taxon>
        <taxon>Gunneridae</taxon>
        <taxon>Pentapetalae</taxon>
        <taxon>rosids</taxon>
        <taxon>malvids</taxon>
        <taxon>Brassicales</taxon>
        <taxon>Brassicaceae</taxon>
        <taxon>Camelineae</taxon>
        <taxon>Arabidopsis</taxon>
    </lineage>
</organism>
<dbReference type="EMBL" id="AB023038">
    <property type="protein sequence ID" value="BAB02404.1"/>
    <property type="molecule type" value="Genomic_DNA"/>
</dbReference>
<dbReference type="EMBL" id="CP002686">
    <property type="protein sequence ID" value="AEE75560.1"/>
    <property type="molecule type" value="Genomic_DNA"/>
</dbReference>
<dbReference type="RefSeq" id="NP_188091.1">
    <property type="nucleotide sequence ID" value="NM_112334.2"/>
</dbReference>
<dbReference type="SMR" id="Q9LUC2"/>
<dbReference type="FunCoup" id="Q9LUC2">
    <property type="interactions" value="31"/>
</dbReference>
<dbReference type="PaxDb" id="3702-AT3G14730.1"/>
<dbReference type="ProteomicsDB" id="249178"/>
<dbReference type="EnsemblPlants" id="AT3G14730.1">
    <property type="protein sequence ID" value="AT3G14730.1"/>
    <property type="gene ID" value="AT3G14730"/>
</dbReference>
<dbReference type="GeneID" id="820701"/>
<dbReference type="Gramene" id="AT3G14730.1">
    <property type="protein sequence ID" value="AT3G14730.1"/>
    <property type="gene ID" value="AT3G14730"/>
</dbReference>
<dbReference type="KEGG" id="ath:AT3G14730"/>
<dbReference type="Araport" id="AT3G14730"/>
<dbReference type="TAIR" id="AT3G14730"/>
<dbReference type="eggNOG" id="KOG4197">
    <property type="taxonomic scope" value="Eukaryota"/>
</dbReference>
<dbReference type="HOGENOM" id="CLU_002706_0_1_1"/>
<dbReference type="InParanoid" id="Q9LUC2"/>
<dbReference type="OMA" id="ELEPEHC"/>
<dbReference type="PhylomeDB" id="Q9LUC2"/>
<dbReference type="PRO" id="PR:Q9LUC2"/>
<dbReference type="Proteomes" id="UP000006548">
    <property type="component" value="Chromosome 3"/>
</dbReference>
<dbReference type="ExpressionAtlas" id="Q9LUC2">
    <property type="expression patterns" value="baseline and differential"/>
</dbReference>
<dbReference type="GO" id="GO:0003723">
    <property type="term" value="F:RNA binding"/>
    <property type="evidence" value="ECO:0007669"/>
    <property type="project" value="InterPro"/>
</dbReference>
<dbReference type="GO" id="GO:0009451">
    <property type="term" value="P:RNA modification"/>
    <property type="evidence" value="ECO:0007669"/>
    <property type="project" value="InterPro"/>
</dbReference>
<dbReference type="FunFam" id="1.25.40.10:FF:000529">
    <property type="entry name" value="Pentatricopeptide repeat-containing protein"/>
    <property type="match status" value="1"/>
</dbReference>
<dbReference type="FunFam" id="1.25.40.10:FF:000627">
    <property type="entry name" value="Pentatricopeptide repeat-containing protein"/>
    <property type="match status" value="1"/>
</dbReference>
<dbReference type="FunFam" id="1.25.40.10:FF:000305">
    <property type="entry name" value="Pentatricopeptide repeat-containing protein mitochondrial"/>
    <property type="match status" value="1"/>
</dbReference>
<dbReference type="Gene3D" id="1.25.40.10">
    <property type="entry name" value="Tetratricopeptide repeat domain"/>
    <property type="match status" value="4"/>
</dbReference>
<dbReference type="InterPro" id="IPR046848">
    <property type="entry name" value="E_motif"/>
</dbReference>
<dbReference type="InterPro" id="IPR002885">
    <property type="entry name" value="Pentatricopeptide_rpt"/>
</dbReference>
<dbReference type="InterPro" id="IPR046960">
    <property type="entry name" value="PPR_At4g14850-like_plant"/>
</dbReference>
<dbReference type="InterPro" id="IPR011990">
    <property type="entry name" value="TPR-like_helical_dom_sf"/>
</dbReference>
<dbReference type="NCBIfam" id="TIGR00756">
    <property type="entry name" value="PPR"/>
    <property type="match status" value="4"/>
</dbReference>
<dbReference type="PANTHER" id="PTHR47926">
    <property type="entry name" value="PENTATRICOPEPTIDE REPEAT-CONTAINING PROTEIN"/>
    <property type="match status" value="1"/>
</dbReference>
<dbReference type="PANTHER" id="PTHR47926:SF347">
    <property type="entry name" value="PENTATRICOPEPTIDE REPEAT-CONTAINING PROTEIN"/>
    <property type="match status" value="1"/>
</dbReference>
<dbReference type="Pfam" id="PF20431">
    <property type="entry name" value="E_motif"/>
    <property type="match status" value="1"/>
</dbReference>
<dbReference type="Pfam" id="PF01535">
    <property type="entry name" value="PPR"/>
    <property type="match status" value="3"/>
</dbReference>
<dbReference type="Pfam" id="PF13041">
    <property type="entry name" value="PPR_2"/>
    <property type="match status" value="3"/>
</dbReference>
<dbReference type="SUPFAM" id="SSF48452">
    <property type="entry name" value="TPR-like"/>
    <property type="match status" value="1"/>
</dbReference>
<dbReference type="PROSITE" id="PS51375">
    <property type="entry name" value="PPR"/>
    <property type="match status" value="13"/>
</dbReference>
<evidence type="ECO:0000305" key="1"/>
<comment type="similarity">
    <text evidence="1">Belongs to the PPR family. PCMP-E subfamily.</text>
</comment>
<comment type="online information" name="Pentatricopeptide repeat proteins">
    <link uri="https://ppr.plantenergy.uwa.edu.au"/>
</comment>
<accession>Q9LUC2</accession>